<protein>
    <recommendedName>
        <fullName evidence="1">Small ribosomal subunit protein eS1</fullName>
    </recommendedName>
    <alternativeName>
        <fullName evidence="2">30S ribosomal protein S3Ae</fullName>
    </alternativeName>
    <alternativeName>
        <fullName evidence="1">Ribosomal protein S1e</fullName>
    </alternativeName>
</protein>
<reference key="1">
    <citation type="journal article" date="2009" name="J. Bacteriol.">
        <title>Complete genome sequence of the anaerobic, protein-degrading hyperthermophilic crenarchaeon Desulfurococcus kamchatkensis.</title>
        <authorList>
            <person name="Ravin N.V."/>
            <person name="Mardanov A.V."/>
            <person name="Beletsky A.V."/>
            <person name="Kublanov I.V."/>
            <person name="Kolganova T.V."/>
            <person name="Lebedinsky A.V."/>
            <person name="Chernyh N.A."/>
            <person name="Bonch-Osmolovskaya E.A."/>
            <person name="Skryabin K.G."/>
        </authorList>
    </citation>
    <scope>NUCLEOTIDE SEQUENCE [LARGE SCALE GENOMIC DNA]</scope>
    <source>
        <strain>DSM 18924 / JCM 16383 / VKM B-2413 / 1221n</strain>
    </source>
</reference>
<comment type="similarity">
    <text evidence="1">Belongs to the eukaryotic ribosomal protein eS1 family.</text>
</comment>
<gene>
    <name evidence="1" type="primary">rps3ae</name>
    <name type="ordered locus">DKAM_1335</name>
</gene>
<dbReference type="EMBL" id="CP001140">
    <property type="protein sequence ID" value="ACL11661.1"/>
    <property type="molecule type" value="Genomic_DNA"/>
</dbReference>
<dbReference type="RefSeq" id="WP_012609002.1">
    <property type="nucleotide sequence ID" value="NC_011766.1"/>
</dbReference>
<dbReference type="SMR" id="B8D6D0"/>
<dbReference type="STRING" id="490899.DKAM_1335"/>
<dbReference type="GeneID" id="7171385"/>
<dbReference type="KEGG" id="dka:DKAM_1335"/>
<dbReference type="eggNOG" id="arCOG04186">
    <property type="taxonomic scope" value="Archaea"/>
</dbReference>
<dbReference type="HOGENOM" id="CLU_062507_1_0_2"/>
<dbReference type="Proteomes" id="UP000006903">
    <property type="component" value="Chromosome"/>
</dbReference>
<dbReference type="GO" id="GO:1990904">
    <property type="term" value="C:ribonucleoprotein complex"/>
    <property type="evidence" value="ECO:0007669"/>
    <property type="project" value="UniProtKB-KW"/>
</dbReference>
<dbReference type="GO" id="GO:0005840">
    <property type="term" value="C:ribosome"/>
    <property type="evidence" value="ECO:0007669"/>
    <property type="project" value="UniProtKB-KW"/>
</dbReference>
<dbReference type="GO" id="GO:0003735">
    <property type="term" value="F:structural constituent of ribosome"/>
    <property type="evidence" value="ECO:0007669"/>
    <property type="project" value="InterPro"/>
</dbReference>
<dbReference type="GO" id="GO:0006412">
    <property type="term" value="P:translation"/>
    <property type="evidence" value="ECO:0007669"/>
    <property type="project" value="UniProtKB-UniRule"/>
</dbReference>
<dbReference type="HAMAP" id="MF_00359">
    <property type="entry name" value="Ribosomal_eS1"/>
    <property type="match status" value="1"/>
</dbReference>
<dbReference type="InterPro" id="IPR001593">
    <property type="entry name" value="Ribosomal_eS1"/>
</dbReference>
<dbReference type="InterPro" id="IPR030838">
    <property type="entry name" value="Ribosomal_eS1_arc"/>
</dbReference>
<dbReference type="InterPro" id="IPR018281">
    <property type="entry name" value="Ribosomal_eS1_CS"/>
</dbReference>
<dbReference type="NCBIfam" id="NF003142">
    <property type="entry name" value="PRK04057.1"/>
    <property type="match status" value="1"/>
</dbReference>
<dbReference type="PANTHER" id="PTHR11830">
    <property type="entry name" value="40S RIBOSOMAL PROTEIN S3A"/>
    <property type="match status" value="1"/>
</dbReference>
<dbReference type="Pfam" id="PF01015">
    <property type="entry name" value="Ribosomal_S3Ae"/>
    <property type="match status" value="1"/>
</dbReference>
<dbReference type="SMART" id="SM01397">
    <property type="entry name" value="Ribosomal_S3Ae"/>
    <property type="match status" value="1"/>
</dbReference>
<dbReference type="PROSITE" id="PS01191">
    <property type="entry name" value="RIBOSOMAL_S3AE"/>
    <property type="match status" value="1"/>
</dbReference>
<proteinExistence type="inferred from homology"/>
<sequence length="213" mass="24436">MSSKHRAVVKDKWKMKKWYEVVAPTSFGGITLGSTPADDPEKLIGRVIETTLYDITGDITQVHVKLYFQIISIDGNKALTRFKGHELARDYMRSLVRRKSSKIQGIFDINTKDGYVLRVTIVALTSYRCNTSQKKAIRRVMREYIFKKASELTLDELVQEIMSYKISNEIAELARKIYPIRRVEVYKTKLLLIPSPEGPKPAVVISPLQAREE</sequence>
<name>RS3A_DESA1</name>
<accession>B8D6D0</accession>
<evidence type="ECO:0000255" key="1">
    <source>
        <dbReference type="HAMAP-Rule" id="MF_00359"/>
    </source>
</evidence>
<evidence type="ECO:0000305" key="2"/>
<feature type="chain" id="PRO_1000133498" description="Small ribosomal subunit protein eS1">
    <location>
        <begin position="1"/>
        <end position="213"/>
    </location>
</feature>
<organism>
    <name type="scientific">Desulfurococcus amylolyticus (strain DSM 18924 / JCM 16383 / VKM B-2413 / 1221n)</name>
    <name type="common">Desulfurococcus kamchatkensis</name>
    <dbReference type="NCBI Taxonomy" id="490899"/>
    <lineage>
        <taxon>Archaea</taxon>
        <taxon>Thermoproteota</taxon>
        <taxon>Thermoprotei</taxon>
        <taxon>Desulfurococcales</taxon>
        <taxon>Desulfurococcaceae</taxon>
        <taxon>Desulfurococcus</taxon>
    </lineage>
</organism>
<keyword id="KW-0687">Ribonucleoprotein</keyword>
<keyword id="KW-0689">Ribosomal protein</keyword>